<sequence length="108" mass="11849">MALWILLPLLALLILWGPDPAQAFVNQHLCGSHLVEALYILVCGERGFFYTPMSRREVEDPQVGQVELGAGPGAGSEQTLALEVARQARIVQQCTSGICSLYQENYCN</sequence>
<dbReference type="SMR" id="P21563"/>
<dbReference type="GO" id="GO:0005615">
    <property type="term" value="C:extracellular space"/>
    <property type="evidence" value="ECO:0007669"/>
    <property type="project" value="TreeGrafter"/>
</dbReference>
<dbReference type="GO" id="GO:0005179">
    <property type="term" value="F:hormone activity"/>
    <property type="evidence" value="ECO:0007669"/>
    <property type="project" value="UniProtKB-KW"/>
</dbReference>
<dbReference type="GO" id="GO:0005158">
    <property type="term" value="F:insulin receptor binding"/>
    <property type="evidence" value="ECO:0007669"/>
    <property type="project" value="TreeGrafter"/>
</dbReference>
<dbReference type="GO" id="GO:1901701">
    <property type="term" value="P:cellular response to oxygen-containing compound"/>
    <property type="evidence" value="ECO:0007669"/>
    <property type="project" value="UniProtKB-ARBA"/>
</dbReference>
<dbReference type="GO" id="GO:0042593">
    <property type="term" value="P:glucose homeostasis"/>
    <property type="evidence" value="ECO:0007669"/>
    <property type="project" value="TreeGrafter"/>
</dbReference>
<dbReference type="GO" id="GO:0006006">
    <property type="term" value="P:glucose metabolic process"/>
    <property type="evidence" value="ECO:0007669"/>
    <property type="project" value="UniProtKB-KW"/>
</dbReference>
<dbReference type="GO" id="GO:0050714">
    <property type="term" value="P:positive regulation of protein secretion"/>
    <property type="evidence" value="ECO:0007669"/>
    <property type="project" value="TreeGrafter"/>
</dbReference>
<dbReference type="CDD" id="cd04367">
    <property type="entry name" value="IlGF_insulin_like"/>
    <property type="match status" value="1"/>
</dbReference>
<dbReference type="FunFam" id="1.10.100.10:FF:000003">
    <property type="entry name" value="Insulin"/>
    <property type="match status" value="1"/>
</dbReference>
<dbReference type="Gene3D" id="1.10.100.10">
    <property type="entry name" value="Insulin-like"/>
    <property type="match status" value="1"/>
</dbReference>
<dbReference type="InterPro" id="IPR004825">
    <property type="entry name" value="Insulin"/>
</dbReference>
<dbReference type="InterPro" id="IPR016179">
    <property type="entry name" value="Insulin-like"/>
</dbReference>
<dbReference type="InterPro" id="IPR036438">
    <property type="entry name" value="Insulin-like_sf"/>
</dbReference>
<dbReference type="PANTHER" id="PTHR11454:SF9">
    <property type="entry name" value="INSULIN"/>
    <property type="match status" value="1"/>
</dbReference>
<dbReference type="PANTHER" id="PTHR11454">
    <property type="entry name" value="INSULIN/INSULIN GROWTH FACTOR"/>
    <property type="match status" value="1"/>
</dbReference>
<dbReference type="Pfam" id="PF00049">
    <property type="entry name" value="Insulin"/>
    <property type="match status" value="1"/>
</dbReference>
<dbReference type="PRINTS" id="PR00277">
    <property type="entry name" value="INSULIN"/>
</dbReference>
<dbReference type="SMART" id="SM00078">
    <property type="entry name" value="IlGF"/>
    <property type="match status" value="1"/>
</dbReference>
<dbReference type="SUPFAM" id="SSF56994">
    <property type="entry name" value="Insulin-like"/>
    <property type="match status" value="1"/>
</dbReference>
<organism>
    <name type="scientific">Rodentia sp</name>
    <dbReference type="NCBI Taxonomy" id="69158"/>
    <lineage>
        <taxon>Eukaryota</taxon>
        <taxon>Metazoa</taxon>
        <taxon>Chordata</taxon>
        <taxon>Craniata</taxon>
        <taxon>Vertebrata</taxon>
        <taxon>Euteleostomi</taxon>
        <taxon>Mammalia</taxon>
        <taxon>Eutheria</taxon>
        <taxon>Euarchontoglires</taxon>
        <taxon>Glires</taxon>
        <taxon>Rodentia</taxon>
    </lineage>
</organism>
<accession>P21563</accession>
<feature type="signal peptide">
    <location>
        <begin position="1"/>
        <end position="23"/>
    </location>
</feature>
<feature type="peptide" id="PRO_0000015901" description="Insulin B chain">
    <location>
        <begin position="24"/>
        <end position="54"/>
    </location>
</feature>
<feature type="propeptide" id="PRO_0000015902" description="C peptide">
    <location>
        <begin position="57"/>
        <end position="88"/>
    </location>
</feature>
<feature type="peptide" id="PRO_0000015903" description="Insulin A chain">
    <location>
        <begin position="90"/>
        <end position="108"/>
    </location>
</feature>
<feature type="disulfide bond" description="Interchain (between B and A chains)" evidence="1">
    <location>
        <begin position="30"/>
        <end position="94"/>
    </location>
</feature>
<feature type="disulfide bond" description="Interchain (between B and A chains)" evidence="1">
    <location>
        <begin position="43"/>
        <end position="107"/>
    </location>
</feature>
<protein>
    <recommendedName>
        <fullName>Insulin</fullName>
    </recommendedName>
    <component>
        <recommendedName>
            <fullName>Insulin B chain</fullName>
        </recommendedName>
    </component>
    <component>
        <recommendedName>
            <fullName>Insulin A chain</fullName>
        </recommendedName>
    </component>
</protein>
<proteinExistence type="inferred from homology"/>
<gene>
    <name type="primary">INS</name>
</gene>
<comment type="function">
    <text>Insulin decreases blood glucose concentration. It increases cell permeability to monosaccharides, amino acids and fatty acids. It accelerates glycolysis, the pentose phosphate cycle, and glycogen synthesis in liver.</text>
</comment>
<comment type="subunit">
    <text>Heterodimer of a B chain and an A chain linked by two disulfide bonds.</text>
</comment>
<comment type="subcellular location">
    <subcellularLocation>
        <location>Secreted</location>
    </subcellularLocation>
    <text>Stored in spherulous cells prior to secretion.</text>
</comment>
<comment type="similarity">
    <text evidence="2">Belongs to the insulin family.</text>
</comment>
<comment type="caution">
    <text evidence="3">Was originally (PubMed:2531072) thought to originate from the sponge Geodia cydonium, but, on the basis of phylogenetic studies (Ref.2) it seems very probable that the DNA sequence coding for this protein comes from a rodent as agreed by the original authors (Ref.3). It is also doubtful that this is a real active insulin.</text>
</comment>
<keyword id="KW-0119">Carbohydrate metabolism</keyword>
<keyword id="KW-0165">Cleavage on pair of basic residues</keyword>
<keyword id="KW-1015">Disulfide bond</keyword>
<keyword id="KW-0313">Glucose metabolism</keyword>
<keyword id="KW-0372">Hormone</keyword>
<keyword id="KW-0964">Secreted</keyword>
<keyword id="KW-0732">Signal</keyword>
<reference key="1">
    <citation type="journal article" date="1989" name="EMBO J.">
        <title>Demonstration of an endocrine signaling circuit for insulin in the sponge Geodia cydonium.</title>
        <authorList>
            <person name="Robitzki A."/>
            <person name="Schroeder H.C."/>
            <person name="Ugarkovic D."/>
            <person name="Pfeifer K."/>
            <person name="Uhlenbruck G."/>
            <person name="Mueller W.E.G."/>
        </authorList>
    </citation>
    <scope>NUCLEOTIDE SEQUENCE [MRNA]</scope>
</reference>
<reference key="2">
    <citation type="unpublished observations" date="1996-02">
        <authorList>
            <person name="Bairoch A."/>
            <person name="Duret L."/>
        </authorList>
    </citation>
    <scope>DOUBTS ON VALIDITY OF SEQUENCE</scope>
</reference>
<reference key="3">
    <citation type="unpublished observations" date="1996-04">
        <authorList>
            <person name="Mueller W.E.G."/>
        </authorList>
    </citation>
    <scope>AGREEMENT WITH RODENT CONTAMINATION</scope>
</reference>
<evidence type="ECO:0000250" key="1"/>
<evidence type="ECO:0000305" key="2"/>
<evidence type="ECO:0000305" key="3">
    <source>
    </source>
</evidence>
<name>INS_RODSP</name>